<proteinExistence type="evidence at protein level"/>
<keyword id="KW-0027">Amidation</keyword>
<keyword id="KW-0204">Cytolysis</keyword>
<keyword id="KW-0903">Direct protein sequencing</keyword>
<keyword id="KW-1015">Disulfide bond</keyword>
<keyword id="KW-0960">Knottin</keyword>
<keyword id="KW-0472">Membrane</keyword>
<keyword id="KW-0528">Neurotoxin</keyword>
<keyword id="KW-0964">Secreted</keyword>
<keyword id="KW-0732">Signal</keyword>
<keyword id="KW-1052">Target cell membrane</keyword>
<keyword id="KW-1053">Target membrane</keyword>
<keyword id="KW-0800">Toxin</keyword>
<sequence>MKVLVICAVLFLTIFSNSSAETEDDFLEDESFEADDVIPFLAREQVRSDCTLRNHDCTDDRHSCCRSKMFKDVCKCFYPSQRSDTARAKKELCTCQQDKHLKFIEKGLQKAKVLVAG</sequence>
<organism>
    <name type="scientific">Cupiennius salei</name>
    <name type="common">American wandering spider</name>
    <dbReference type="NCBI Taxonomy" id="6928"/>
    <lineage>
        <taxon>Eukaryota</taxon>
        <taxon>Metazoa</taxon>
        <taxon>Ecdysozoa</taxon>
        <taxon>Arthropoda</taxon>
        <taxon>Chelicerata</taxon>
        <taxon>Arachnida</taxon>
        <taxon>Araneae</taxon>
        <taxon>Araneomorphae</taxon>
        <taxon>Entelegynae</taxon>
        <taxon>Lycosoidea</taxon>
        <taxon>Ctenidae</taxon>
        <taxon>Cupiennius</taxon>
    </lineage>
</organism>
<evidence type="ECO:0000250" key="1">
    <source>
        <dbReference type="UniProtKB" id="P58604"/>
    </source>
</evidence>
<evidence type="ECO:0000250" key="2">
    <source>
        <dbReference type="UniProtKB" id="P83919"/>
    </source>
</evidence>
<evidence type="ECO:0000255" key="3"/>
<evidence type="ECO:0000269" key="4">
    <source>
    </source>
</evidence>
<evidence type="ECO:0000303" key="5">
    <source>
    </source>
</evidence>
<evidence type="ECO:0000305" key="6">
    <source>
    </source>
</evidence>
<feature type="signal peptide" evidence="3">
    <location>
        <begin position="1"/>
        <end position="20"/>
    </location>
</feature>
<feature type="propeptide" id="PRO_0000452337" evidence="6">
    <location>
        <begin position="21"/>
        <end position="47"/>
    </location>
</feature>
<feature type="peptide" id="PRO_0000421181" description="CSTX-12 A chain" evidence="4">
    <location>
        <begin position="48"/>
        <end position="81"/>
    </location>
</feature>
<feature type="propeptide" id="PRO_0000452338" evidence="6">
    <location>
        <begin position="82"/>
        <end position="87"/>
    </location>
</feature>
<feature type="peptide" id="PRO_0000421182" description="CSTX-12 B chain" evidence="4">
    <location>
        <begin position="88"/>
        <end position="116"/>
    </location>
</feature>
<feature type="modified residue" description="Alanine amide" evidence="4">
    <location>
        <position position="116"/>
    </location>
</feature>
<feature type="disulfide bond" evidence="2">
    <location>
        <begin position="50"/>
        <end position="65"/>
    </location>
</feature>
<feature type="disulfide bond" evidence="2">
    <location>
        <begin position="57"/>
        <end position="74"/>
    </location>
</feature>
<feature type="disulfide bond" description="Interchain (between A and B chains)" evidence="2">
    <location>
        <begin position="64"/>
        <end position="95"/>
    </location>
</feature>
<feature type="disulfide bond" description="Interchain (between A and B chains)" evidence="2">
    <location>
        <begin position="76"/>
        <end position="93"/>
    </location>
</feature>
<reference key="1">
    <citation type="journal article" date="2019" name="Toxins">
        <title>The dual prey-inactivation strategy of spiders-in-depth venomic analysis of Cupiennius salei.</title>
        <authorList>
            <person name="Kuhn-Nentwig L."/>
            <person name="Langenegger N."/>
            <person name="Heller M."/>
            <person name="Koua D."/>
            <person name="Nentwig W."/>
        </authorList>
    </citation>
    <scope>NUCLEOTIDE SEQUENCE [MRNA]</scope>
    <source>
        <tissue>Venom gland</tissue>
    </source>
</reference>
<reference key="2">
    <citation type="journal article" date="2012" name="FEBS J.">
        <title>Multicomponent venom of the spider Cupiennius salei: a bioanalytical investigation applying different strategies.</title>
        <authorList>
            <person name="Trachsel C."/>
            <person name="Siegemund D."/>
            <person name="Kampfer U."/>
            <person name="Kopp L.S."/>
            <person name="Buhr C."/>
            <person name="Grossmann J."/>
            <person name="Luthi C."/>
            <person name="Cunningham M."/>
            <person name="Nentwig W."/>
            <person name="Kuhn-Nentwig L."/>
            <person name="Schurch S."/>
            <person name="Schaller J."/>
        </authorList>
    </citation>
    <scope>PROTEIN SEQUENCE OF 48-81 AND 88-116</scope>
    <scope>MASS SPECTROMETRY</scope>
    <scope>AMIDATION AT ALA-116</scope>
    <scope>SUBCELLULAR LOCATION</scope>
    <source>
        <tissue>Venom</tissue>
    </source>
</reference>
<protein>
    <recommendedName>
        <fullName evidence="5">Toxin CSTX-12</fullName>
    </recommendedName>
    <component>
        <recommendedName>
            <fullName evidence="5">CSTX-12 A chain</fullName>
        </recommendedName>
    </component>
    <component>
        <recommendedName>
            <fullName evidence="5">CSTX-12 B chain</fullName>
        </recommendedName>
    </component>
</protein>
<dbReference type="EMBL" id="MH754557">
    <property type="protein sequence ID" value="QDC23092.1"/>
    <property type="molecule type" value="mRNA"/>
</dbReference>
<dbReference type="EMBL" id="MH754558">
    <property type="protein sequence ID" value="QDC23093.1"/>
    <property type="molecule type" value="mRNA"/>
</dbReference>
<dbReference type="SMR" id="B3EWS6"/>
<dbReference type="GO" id="GO:0005576">
    <property type="term" value="C:extracellular region"/>
    <property type="evidence" value="ECO:0007669"/>
    <property type="project" value="UniProtKB-SubCell"/>
</dbReference>
<dbReference type="GO" id="GO:0016020">
    <property type="term" value="C:membrane"/>
    <property type="evidence" value="ECO:0007669"/>
    <property type="project" value="UniProtKB-KW"/>
</dbReference>
<dbReference type="GO" id="GO:0044218">
    <property type="term" value="C:other organism cell membrane"/>
    <property type="evidence" value="ECO:0007669"/>
    <property type="project" value="UniProtKB-KW"/>
</dbReference>
<dbReference type="GO" id="GO:0090729">
    <property type="term" value="F:toxin activity"/>
    <property type="evidence" value="ECO:0007669"/>
    <property type="project" value="UniProtKB-KW"/>
</dbReference>
<dbReference type="GO" id="GO:0031640">
    <property type="term" value="P:killing of cells of another organism"/>
    <property type="evidence" value="ECO:0007669"/>
    <property type="project" value="UniProtKB-KW"/>
</dbReference>
<dbReference type="InterPro" id="IPR019553">
    <property type="entry name" value="Spider_toxin_CSTX_knottin"/>
</dbReference>
<dbReference type="InterPro" id="IPR011142">
    <property type="entry name" value="Spider_toxin_CSTX_Knottin_CS"/>
</dbReference>
<dbReference type="Pfam" id="PF10530">
    <property type="entry name" value="Toxin_35"/>
    <property type="match status" value="1"/>
</dbReference>
<dbReference type="PROSITE" id="PS60029">
    <property type="entry name" value="SPIDER_CSTX"/>
    <property type="match status" value="1"/>
</dbReference>
<comment type="function">
    <text evidence="2">Synergistic toxin that induces or increases a cytolytic effect when combined with CSTX-1 (AC P81694) or CSTX-9 (AC P58604). When alone, has a weak insecticidal activity, with an unknown molecular target.</text>
</comment>
<comment type="subunit">
    <text evidence="2">Heterodimer of A and B chains; disulfide-linked (By similarity). Interacts with CSTX-1 (AC P81694), and with CSTX-9 (AC P58604) (By similarity).</text>
</comment>
<comment type="subcellular location">
    <subcellularLocation>
        <location evidence="4">Secreted</location>
    </subcellularLocation>
    <subcellularLocation>
        <location evidence="2">Target cell membrane</location>
    </subcellularLocation>
</comment>
<comment type="tissue specificity">
    <text evidence="6">Expressed by the venom gland.</text>
</comment>
<comment type="domain">
    <text evidence="1">The presence of a 'disulfide through disulfide knot' structurally defines this protein as a knottin.</text>
</comment>
<comment type="mass spectrometry">
    <molecule>CSTX-12 A chain</molecule>
</comment>
<comment type="mass spectrometry">
    <molecule>CSTX-12 B chain</molecule>
</comment>
<comment type="similarity">
    <text evidence="3">Belongs to the neurotoxin 19 (CSTX) family. 12 subfamily.</text>
</comment>
<name>TXC12_CUPSA</name>
<accession>B3EWS6</accession>
<accession>A0A4Y5UH66</accession>